<geneLocation type="plasmid">
    <name>pMV158</name>
</geneLocation>
<comment type="function">
    <text>Resistance to tetracycline by an active tetracycline efflux. This is an energy-dependent process that decreases the accumulation of the antibiotic in whole cells. This protein functions as a metal-tetracycline/H(+) antiporter.</text>
</comment>
<comment type="subcellular location">
    <subcellularLocation>
        <location>Cell membrane</location>
        <topology>Multi-pass membrane protein</topology>
    </subcellularLocation>
</comment>
<comment type="similarity">
    <text evidence="2">Belongs to the major facilitator superfamily. TCR/Tet family.</text>
</comment>
<protein>
    <recommendedName>
        <fullName>Tetracycline resistance protein</fullName>
    </recommendedName>
</protein>
<dbReference type="EMBL" id="X15669">
    <property type="protein sequence ID" value="CAA33712.1"/>
    <property type="molecule type" value="Genomic_DNA"/>
</dbReference>
<dbReference type="RefSeq" id="WP_012218461.1">
    <property type="nucleotide sequence ID" value="NC_010096.1"/>
</dbReference>
<dbReference type="RefSeq" id="YP_001586273.1">
    <property type="nucleotide sequence ID" value="NC_010096.1"/>
</dbReference>
<dbReference type="SMR" id="P13924"/>
<dbReference type="GO" id="GO:0005886">
    <property type="term" value="C:plasma membrane"/>
    <property type="evidence" value="ECO:0007669"/>
    <property type="project" value="UniProtKB-SubCell"/>
</dbReference>
<dbReference type="GO" id="GO:0015297">
    <property type="term" value="F:antiporter activity"/>
    <property type="evidence" value="ECO:0007669"/>
    <property type="project" value="UniProtKB-KW"/>
</dbReference>
<dbReference type="GO" id="GO:1902600">
    <property type="term" value="P:proton transmembrane transport"/>
    <property type="evidence" value="ECO:0007669"/>
    <property type="project" value="UniProtKB-KW"/>
</dbReference>
<dbReference type="GO" id="GO:0046677">
    <property type="term" value="P:response to antibiotic"/>
    <property type="evidence" value="ECO:0007669"/>
    <property type="project" value="UniProtKB-KW"/>
</dbReference>
<dbReference type="CDD" id="cd17321">
    <property type="entry name" value="MFS_MMR_MDR_like"/>
    <property type="match status" value="1"/>
</dbReference>
<dbReference type="Gene3D" id="1.20.1250.20">
    <property type="entry name" value="MFS general substrate transporter like domains"/>
    <property type="match status" value="1"/>
</dbReference>
<dbReference type="Gene3D" id="1.20.1720.10">
    <property type="entry name" value="Multidrug resistance protein D"/>
    <property type="match status" value="1"/>
</dbReference>
<dbReference type="InterPro" id="IPR011701">
    <property type="entry name" value="MFS"/>
</dbReference>
<dbReference type="InterPro" id="IPR020846">
    <property type="entry name" value="MFS_dom"/>
</dbReference>
<dbReference type="InterPro" id="IPR036259">
    <property type="entry name" value="MFS_trans_sf"/>
</dbReference>
<dbReference type="NCBIfam" id="NF012185">
    <property type="entry name" value="tet_MFS_L"/>
    <property type="match status" value="1"/>
</dbReference>
<dbReference type="NCBIfam" id="NF012175">
    <property type="entry name" value="tet_MFS_L_K_45"/>
    <property type="match status" value="1"/>
</dbReference>
<dbReference type="PANTHER" id="PTHR23501">
    <property type="entry name" value="MAJOR FACILITATOR SUPERFAMILY"/>
    <property type="match status" value="1"/>
</dbReference>
<dbReference type="PANTHER" id="PTHR23501:SF188">
    <property type="entry name" value="TETRACYCLINE RESISTANCE PROTEIN"/>
    <property type="match status" value="1"/>
</dbReference>
<dbReference type="Pfam" id="PF07690">
    <property type="entry name" value="MFS_1"/>
    <property type="match status" value="1"/>
</dbReference>
<dbReference type="PRINTS" id="PR01036">
    <property type="entry name" value="TCRTETB"/>
</dbReference>
<dbReference type="SUPFAM" id="SSF103473">
    <property type="entry name" value="MFS general substrate transporter"/>
    <property type="match status" value="1"/>
</dbReference>
<dbReference type="PROSITE" id="PS50850">
    <property type="entry name" value="MFS"/>
    <property type="match status" value="1"/>
</dbReference>
<name>TCR_STRAG</name>
<evidence type="ECO:0000255" key="1"/>
<evidence type="ECO:0000305" key="2"/>
<organism>
    <name type="scientific">Streptococcus agalactiae</name>
    <dbReference type="NCBI Taxonomy" id="1311"/>
    <lineage>
        <taxon>Bacteria</taxon>
        <taxon>Bacillati</taxon>
        <taxon>Bacillota</taxon>
        <taxon>Bacilli</taxon>
        <taxon>Lactobacillales</taxon>
        <taxon>Streptococcaceae</taxon>
        <taxon>Streptococcus</taxon>
    </lineage>
</organism>
<proteinExistence type="inferred from homology"/>
<sequence length="458" mass="50006">MNTSYSQSNLRHNQILIWLCILSFFSVLNEMVLNVSLPDIANDFNKPPASTNWVNTAFMLTFSIGTAVYGKLSDQLGIKRLLLFGIIINCFGSVIGFVGHSFFSLLIMARFIQGAGAAAFPALVMVVVARYIPKENRGKAFGLIGSIVAMGEGVGPAIVGMIAHYIHWSYLLLIPMITIITVPFLMKLLKKEVRIKGHFDIKGIILMSVGIVFFMLFTTSYSISFLIVSVLSFLIFVKHIRKVTDPFVDPGLGKNILFMIGVLCGGIIFGTVAGFVSMVPYMMKDVHQLSTAEIGSVIIFPGTMSVIIFGYIGGILVDRRGPLYVLNIGVTFLSVSFLTAFFLLETTSWFMTIIIVFVLGGLSFTKTVIPTIVSSSLKQQEAGAGMSLLNFTSFLSEGTGIAIVGGLLSIPLLDQRLLPMGVDQSTYLYSNLLLLFSGIIVISGLVTVNVYKHSQRDF</sequence>
<feature type="chain" id="PRO_0000173386" description="Tetracycline resistance protein">
    <location>
        <begin position="1"/>
        <end position="458"/>
    </location>
</feature>
<feature type="transmembrane region" description="Helical" evidence="1">
    <location>
        <begin position="12"/>
        <end position="33"/>
    </location>
</feature>
<feature type="transmembrane region" description="Helical" evidence="1">
    <location>
        <begin position="81"/>
        <end position="100"/>
    </location>
</feature>
<feature type="transmembrane region" description="Helical" evidence="1">
    <location>
        <begin position="111"/>
        <end position="129"/>
    </location>
</feature>
<feature type="transmembrane region" description="Helical" evidence="1">
    <location>
        <begin position="140"/>
        <end position="162"/>
    </location>
</feature>
<feature type="transmembrane region" description="Helical" evidence="1">
    <location>
        <begin position="165"/>
        <end position="185"/>
    </location>
</feature>
<feature type="transmembrane region" description="Helical" evidence="1">
    <location>
        <begin position="201"/>
        <end position="221"/>
    </location>
</feature>
<feature type="transmembrane region" description="Helical" evidence="1">
    <location>
        <begin position="223"/>
        <end position="240"/>
    </location>
</feature>
<feature type="transmembrane region" description="Helical" evidence="1">
    <location>
        <begin position="256"/>
        <end position="276"/>
    </location>
</feature>
<feature type="transmembrane region" description="Helical" evidence="1">
    <location>
        <begin position="297"/>
        <end position="317"/>
    </location>
</feature>
<feature type="transmembrane region" description="Helical" evidence="1">
    <location>
        <begin position="324"/>
        <end position="344"/>
    </location>
</feature>
<feature type="transmembrane region" description="Helical" evidence="1">
    <location>
        <begin position="346"/>
        <end position="365"/>
    </location>
</feature>
<feature type="transmembrane region" description="Helical" evidence="1">
    <location>
        <begin position="432"/>
        <end position="451"/>
    </location>
</feature>
<reference key="1">
    <citation type="journal article" date="1989" name="Nucleic Acids Res.">
        <title>Similarity of minus origins of replication and flanking open reading frames of plasmids pUB110, pTB913 and pMV158.</title>
        <authorList>
            <person name="van der Lelie D."/>
            <person name="Bron S."/>
            <person name="Venema G."/>
            <person name="Oskam L."/>
        </authorList>
    </citation>
    <scope>NUCLEOTIDE SEQUENCE [GENOMIC DNA]</scope>
</reference>
<accession>P13924</accession>
<keyword id="KW-0046">Antibiotic resistance</keyword>
<keyword id="KW-0050">Antiport</keyword>
<keyword id="KW-1003">Cell membrane</keyword>
<keyword id="KW-0375">Hydrogen ion transport</keyword>
<keyword id="KW-0406">Ion transport</keyword>
<keyword id="KW-0472">Membrane</keyword>
<keyword id="KW-0614">Plasmid</keyword>
<keyword id="KW-0812">Transmembrane</keyword>
<keyword id="KW-1133">Transmembrane helix</keyword>
<keyword id="KW-0813">Transport</keyword>
<gene>
    <name type="primary">tet</name>
</gene>